<organismHost>
    <name type="scientific">Sus scrofa</name>
    <name type="common">Pig</name>
    <dbReference type="NCBI Taxonomy" id="9823"/>
</organismHost>
<evidence type="ECO:0000255" key="1"/>
<evidence type="ECO:0000255" key="2">
    <source>
        <dbReference type="PROSITE-ProRule" id="PRU00521"/>
    </source>
</evidence>
<sequence>MSDCIFVFQIPFIVYSKLDQWIFGNILCKIMSVLYYVGFFSNMFIITLMSIDRYFAIVHPIKRQPYRTKRIGILMCCSAWLLSLILSSPVSKLYENIPHMSKDIYQCTLTNENDSIIAFIKRLMQIEITILGFLIPIIIFVYCYYRIFSTVVRLRNRRKYKSIKIVLMIVVCSLICWIPLYIVLMIATIVSLYTSNIFRHLCLYLNLAYAITFSETISLARCCINPIIYTLIGEHVRSRISSICSCIYRDNRIRKKLFSRKSSSSSNII</sequence>
<organism>
    <name type="scientific">Swinepox virus (strain Kasza)</name>
    <name type="common">SWPV</name>
    <dbReference type="NCBI Taxonomy" id="10277"/>
    <lineage>
        <taxon>Viruses</taxon>
        <taxon>Varidnaviria</taxon>
        <taxon>Bamfordvirae</taxon>
        <taxon>Nucleocytoviricota</taxon>
        <taxon>Pokkesviricetes</taxon>
        <taxon>Chitovirales</taxon>
        <taxon>Poxviridae</taxon>
        <taxon>Chordopoxvirinae</taxon>
        <taxon>Suipoxvirus</taxon>
        <taxon>Swinepox virus</taxon>
    </lineage>
</organism>
<comment type="subcellular location">
    <subcellularLocation>
        <location>Host cell membrane</location>
        <topology>Multi-pass membrane protein</topology>
    </subcellularLocation>
</comment>
<comment type="similarity">
    <text evidence="2">Belongs to the G-protein coupled receptor 1 family.</text>
</comment>
<gene>
    <name type="ORF">C3L</name>
</gene>
<proteinExistence type="inferred from homology"/>
<feature type="chain" id="PRO_0000070251" description="G-protein coupled receptor homolog C3">
    <location>
        <begin position="1"/>
        <end position="269"/>
    </location>
</feature>
<feature type="transmembrane region" description="Helical" evidence="1">
    <location>
        <begin position="30"/>
        <end position="50"/>
    </location>
</feature>
<feature type="transmembrane region" description="Helical" evidence="1">
    <location>
        <begin position="71"/>
        <end position="91"/>
    </location>
</feature>
<feature type="transmembrane region" description="Helical" evidence="1">
    <location>
        <begin position="123"/>
        <end position="143"/>
    </location>
</feature>
<feature type="transmembrane region" description="Helical" evidence="1">
    <location>
        <begin position="165"/>
        <end position="185"/>
    </location>
</feature>
<feature type="transmembrane region" description="Helical" evidence="1">
    <location>
        <begin position="200"/>
        <end position="220"/>
    </location>
</feature>
<feature type="disulfide bond" evidence="2">
    <location>
        <begin position="28"/>
        <end position="107"/>
    </location>
</feature>
<name>VC03_SWPVK</name>
<keyword id="KW-1015">Disulfide bond</keyword>
<keyword id="KW-0297">G-protein coupled receptor</keyword>
<keyword id="KW-1032">Host cell membrane</keyword>
<keyword id="KW-1043">Host membrane</keyword>
<keyword id="KW-0472">Membrane</keyword>
<keyword id="KW-0675">Receptor</keyword>
<keyword id="KW-0807">Transducer</keyword>
<keyword id="KW-0812">Transmembrane</keyword>
<keyword id="KW-1133">Transmembrane helix</keyword>
<dbReference type="EMBL" id="L22013">
    <property type="protein sequence ID" value="AAC37868.1"/>
    <property type="molecule type" value="Unassigned_RNA"/>
</dbReference>
<dbReference type="SMR" id="P32229"/>
<dbReference type="GO" id="GO:0020002">
    <property type="term" value="C:host cell plasma membrane"/>
    <property type="evidence" value="ECO:0007669"/>
    <property type="project" value="UniProtKB-SubCell"/>
</dbReference>
<dbReference type="GO" id="GO:0016020">
    <property type="term" value="C:membrane"/>
    <property type="evidence" value="ECO:0007669"/>
    <property type="project" value="UniProtKB-KW"/>
</dbReference>
<dbReference type="GO" id="GO:0019957">
    <property type="term" value="F:C-C chemokine binding"/>
    <property type="evidence" value="ECO:0007669"/>
    <property type="project" value="TreeGrafter"/>
</dbReference>
<dbReference type="GO" id="GO:0016493">
    <property type="term" value="F:C-C chemokine receptor activity"/>
    <property type="evidence" value="ECO:0007669"/>
    <property type="project" value="TreeGrafter"/>
</dbReference>
<dbReference type="GO" id="GO:0019722">
    <property type="term" value="P:calcium-mediated signaling"/>
    <property type="evidence" value="ECO:0007669"/>
    <property type="project" value="TreeGrafter"/>
</dbReference>
<dbReference type="GO" id="GO:0060326">
    <property type="term" value="P:cell chemotaxis"/>
    <property type="evidence" value="ECO:0007669"/>
    <property type="project" value="TreeGrafter"/>
</dbReference>
<dbReference type="GO" id="GO:0006955">
    <property type="term" value="P:immune response"/>
    <property type="evidence" value="ECO:0007669"/>
    <property type="project" value="TreeGrafter"/>
</dbReference>
<dbReference type="GO" id="GO:0007204">
    <property type="term" value="P:positive regulation of cytosolic calcium ion concentration"/>
    <property type="evidence" value="ECO:0007669"/>
    <property type="project" value="TreeGrafter"/>
</dbReference>
<dbReference type="Gene3D" id="1.20.1070.10">
    <property type="entry name" value="Rhodopsin 7-helix transmembrane proteins"/>
    <property type="match status" value="1"/>
</dbReference>
<dbReference type="InterPro" id="IPR050119">
    <property type="entry name" value="CCR1-9-like"/>
</dbReference>
<dbReference type="InterPro" id="IPR000276">
    <property type="entry name" value="GPCR_Rhodpsn"/>
</dbReference>
<dbReference type="InterPro" id="IPR017452">
    <property type="entry name" value="GPCR_Rhodpsn_7TM"/>
</dbReference>
<dbReference type="PANTHER" id="PTHR10489:SF627">
    <property type="entry name" value="C-C CHEMOKINE RECEPTOR TYPE 8"/>
    <property type="match status" value="1"/>
</dbReference>
<dbReference type="PANTHER" id="PTHR10489">
    <property type="entry name" value="CELL ADHESION MOLECULE"/>
    <property type="match status" value="1"/>
</dbReference>
<dbReference type="Pfam" id="PF00001">
    <property type="entry name" value="7tm_1"/>
    <property type="match status" value="1"/>
</dbReference>
<dbReference type="PRINTS" id="PR00237">
    <property type="entry name" value="GPCRRHODOPSN"/>
</dbReference>
<dbReference type="SUPFAM" id="SSF81321">
    <property type="entry name" value="Family A G protein-coupled receptor-like"/>
    <property type="match status" value="1"/>
</dbReference>
<dbReference type="PROSITE" id="PS00237">
    <property type="entry name" value="G_PROTEIN_RECEP_F1_1"/>
    <property type="match status" value="1"/>
</dbReference>
<dbReference type="PROSITE" id="PS50262">
    <property type="entry name" value="G_PROTEIN_RECEP_F1_2"/>
    <property type="match status" value="1"/>
</dbReference>
<reference key="1">
    <citation type="journal article" date="1993" name="Virology">
        <title>DNA sequence analysis of conserved and unique regions of swinepox virus: identification of genetic elements supporting phenotypic observations including a novel G protein-coupled receptor homologue.</title>
        <authorList>
            <person name="Massung R.F."/>
            <person name="Jayarama V."/>
            <person name="Moyer R.W."/>
        </authorList>
    </citation>
    <scope>NUCLEOTIDE SEQUENCE</scope>
</reference>
<protein>
    <recommendedName>
        <fullName>G-protein coupled receptor homolog C3</fullName>
    </recommendedName>
</protein>
<accession>P32229</accession>